<reference key="1">
    <citation type="journal article" date="1995" name="Science">
        <title>Whole-genome random sequencing and assembly of Haemophilus influenzae Rd.</title>
        <authorList>
            <person name="Fleischmann R.D."/>
            <person name="Adams M.D."/>
            <person name="White O."/>
            <person name="Clayton R.A."/>
            <person name="Kirkness E.F."/>
            <person name="Kerlavage A.R."/>
            <person name="Bult C.J."/>
            <person name="Tomb J.-F."/>
            <person name="Dougherty B.A."/>
            <person name="Merrick J.M."/>
            <person name="McKenney K."/>
            <person name="Sutton G.G."/>
            <person name="FitzHugh W."/>
            <person name="Fields C.A."/>
            <person name="Gocayne J.D."/>
            <person name="Scott J.D."/>
            <person name="Shirley R."/>
            <person name="Liu L.-I."/>
            <person name="Glodek A."/>
            <person name="Kelley J.M."/>
            <person name="Weidman J.F."/>
            <person name="Phillips C.A."/>
            <person name="Spriggs T."/>
            <person name="Hedblom E."/>
            <person name="Cotton M.D."/>
            <person name="Utterback T.R."/>
            <person name="Hanna M.C."/>
            <person name="Nguyen D.T."/>
            <person name="Saudek D.M."/>
            <person name="Brandon R.C."/>
            <person name="Fine L.D."/>
            <person name="Fritchman J.L."/>
            <person name="Fuhrmann J.L."/>
            <person name="Geoghagen N.S.M."/>
            <person name="Gnehm C.L."/>
            <person name="McDonald L.A."/>
            <person name="Small K.V."/>
            <person name="Fraser C.M."/>
            <person name="Smith H.O."/>
            <person name="Venter J.C."/>
        </authorList>
    </citation>
    <scope>NUCLEOTIDE SEQUENCE [LARGE SCALE GENOMIC DNA]</scope>
    <source>
        <strain>ATCC 51907 / DSM 11121 / KW20 / Rd</strain>
    </source>
</reference>
<organism>
    <name type="scientific">Haemophilus influenzae (strain ATCC 51907 / DSM 11121 / KW20 / Rd)</name>
    <dbReference type="NCBI Taxonomy" id="71421"/>
    <lineage>
        <taxon>Bacteria</taxon>
        <taxon>Pseudomonadati</taxon>
        <taxon>Pseudomonadota</taxon>
        <taxon>Gammaproteobacteria</taxon>
        <taxon>Pasteurellales</taxon>
        <taxon>Pasteurellaceae</taxon>
        <taxon>Haemophilus</taxon>
    </lineage>
</organism>
<name>AKH_HAEIN</name>
<protein>
    <recommendedName>
        <fullName>Bifunctional aspartokinase/homoserine dehydrogenase</fullName>
        <shortName>AK-HD</shortName>
    </recommendedName>
    <domain>
        <recommendedName>
            <fullName>Aspartokinase</fullName>
            <ecNumber>2.7.2.4</ecNumber>
        </recommendedName>
    </domain>
    <domain>
        <recommendedName>
            <fullName>Homoserine dehydrogenase</fullName>
            <ecNumber>1.1.1.3</ecNumber>
        </recommendedName>
    </domain>
</protein>
<accession>P44505</accession>
<proteinExistence type="inferred from homology"/>
<comment type="function">
    <text evidence="5">Bifunctional aspartate kinase and homoserine dehydrogenase that catalyzes the first and the third steps toward the synthesis of lysine, methionine and threonine from aspartate.</text>
</comment>
<comment type="catalytic activity">
    <reaction evidence="5">
        <text>L-homoserine + NADP(+) = L-aspartate 4-semialdehyde + NADPH + H(+)</text>
        <dbReference type="Rhea" id="RHEA:15761"/>
        <dbReference type="ChEBI" id="CHEBI:15378"/>
        <dbReference type="ChEBI" id="CHEBI:57476"/>
        <dbReference type="ChEBI" id="CHEBI:57783"/>
        <dbReference type="ChEBI" id="CHEBI:58349"/>
        <dbReference type="ChEBI" id="CHEBI:537519"/>
        <dbReference type="EC" id="1.1.1.3"/>
    </reaction>
    <physiologicalReaction direction="right-to-left" evidence="5">
        <dbReference type="Rhea" id="RHEA:15763"/>
    </physiologicalReaction>
</comment>
<comment type="catalytic activity">
    <reaction evidence="5">
        <text>L-homoserine + NAD(+) = L-aspartate 4-semialdehyde + NADH + H(+)</text>
        <dbReference type="Rhea" id="RHEA:15757"/>
        <dbReference type="ChEBI" id="CHEBI:15378"/>
        <dbReference type="ChEBI" id="CHEBI:57476"/>
        <dbReference type="ChEBI" id="CHEBI:57540"/>
        <dbReference type="ChEBI" id="CHEBI:57945"/>
        <dbReference type="ChEBI" id="CHEBI:537519"/>
        <dbReference type="EC" id="1.1.1.3"/>
    </reaction>
    <physiologicalReaction direction="right-to-left" evidence="5">
        <dbReference type="Rhea" id="RHEA:15759"/>
    </physiologicalReaction>
</comment>
<comment type="catalytic activity">
    <reaction evidence="5">
        <text>L-aspartate + ATP = 4-phospho-L-aspartate + ADP</text>
        <dbReference type="Rhea" id="RHEA:23776"/>
        <dbReference type="ChEBI" id="CHEBI:29991"/>
        <dbReference type="ChEBI" id="CHEBI:30616"/>
        <dbReference type="ChEBI" id="CHEBI:57535"/>
        <dbReference type="ChEBI" id="CHEBI:456216"/>
        <dbReference type="EC" id="2.7.2.4"/>
    </reaction>
    <physiologicalReaction direction="left-to-right" evidence="5">
        <dbReference type="Rhea" id="RHEA:23777"/>
    </physiologicalReaction>
</comment>
<comment type="cofactor">
    <cofactor evidence="4">
        <name>a metal cation</name>
        <dbReference type="ChEBI" id="CHEBI:25213"/>
    </cofactor>
    <text evidence="4">A sodium ion is seen in the structure; a metal ion may subtly affect the relative position of the nucleotide-binding region to influence enzyme activity, and could increase the stability of the enzyme.</text>
</comment>
<comment type="pathway">
    <text evidence="5">Amino-acid biosynthesis; L-lysine biosynthesis via DAP pathway; (S)-tetrahydrodipicolinate from L-aspartate: step 1/4.</text>
</comment>
<comment type="pathway">
    <text evidence="5">Amino-acid biosynthesis; L-methionine biosynthesis via de novo pathway; L-homoserine from L-aspartate: step 1/3.</text>
</comment>
<comment type="pathway">
    <text evidence="5">Amino-acid biosynthesis; L-methionine biosynthesis via de novo pathway; L-homoserine from L-aspartate: step 3/3.</text>
</comment>
<comment type="pathway">
    <text evidence="5">Amino-acid biosynthesis; L-threonine biosynthesis; L-threonine from L-aspartate: step 1/5.</text>
</comment>
<comment type="pathway">
    <text evidence="5">Amino-acid biosynthesis; L-threonine biosynthesis; L-threonine from L-aspartate: step 3/5.</text>
</comment>
<comment type="subunit">
    <text evidence="1">Homotetramer.</text>
</comment>
<comment type="similarity">
    <text evidence="8">In the N-terminal section; belongs to the aspartokinase family.</text>
</comment>
<comment type="similarity">
    <text evidence="8">In the C-terminal section; belongs to the homoserine dehydrogenase family.</text>
</comment>
<gene>
    <name type="primary">thrA</name>
    <name type="ordered locus">HI_0089</name>
</gene>
<dbReference type="EC" id="2.7.2.4"/>
<dbReference type="EC" id="1.1.1.3"/>
<dbReference type="EMBL" id="L42023">
    <property type="protein sequence ID" value="AAC21767.1"/>
    <property type="molecule type" value="Genomic_DNA"/>
</dbReference>
<dbReference type="PIR" id="A64048">
    <property type="entry name" value="A64048"/>
</dbReference>
<dbReference type="RefSeq" id="NP_438262.1">
    <property type="nucleotide sequence ID" value="NC_000907.1"/>
</dbReference>
<dbReference type="SMR" id="P44505"/>
<dbReference type="STRING" id="71421.HI_0089"/>
<dbReference type="EnsemblBacteria" id="AAC21767">
    <property type="protein sequence ID" value="AAC21767"/>
    <property type="gene ID" value="HI_0089"/>
</dbReference>
<dbReference type="KEGG" id="hin:HI_0089"/>
<dbReference type="PATRIC" id="fig|71421.8.peg.90"/>
<dbReference type="eggNOG" id="COG0460">
    <property type="taxonomic scope" value="Bacteria"/>
</dbReference>
<dbReference type="eggNOG" id="COG0527">
    <property type="taxonomic scope" value="Bacteria"/>
</dbReference>
<dbReference type="HOGENOM" id="CLU_009116_7_1_6"/>
<dbReference type="OrthoDB" id="9799110at2"/>
<dbReference type="PhylomeDB" id="P44505"/>
<dbReference type="BioCyc" id="HINF71421:G1GJ1-94-MONOMER"/>
<dbReference type="UniPathway" id="UPA00034">
    <property type="reaction ID" value="UER00015"/>
</dbReference>
<dbReference type="UniPathway" id="UPA00050">
    <property type="reaction ID" value="UER00063"/>
</dbReference>
<dbReference type="UniPathway" id="UPA00050">
    <property type="reaction ID" value="UER00461"/>
</dbReference>
<dbReference type="UniPathway" id="UPA00051">
    <property type="reaction ID" value="UER00462"/>
</dbReference>
<dbReference type="UniPathway" id="UPA00051">
    <property type="reaction ID" value="UER00465"/>
</dbReference>
<dbReference type="Proteomes" id="UP000000579">
    <property type="component" value="Chromosome"/>
</dbReference>
<dbReference type="GO" id="GO:0004072">
    <property type="term" value="F:aspartate kinase activity"/>
    <property type="evidence" value="ECO:0000318"/>
    <property type="project" value="GO_Central"/>
</dbReference>
<dbReference type="GO" id="GO:0005524">
    <property type="term" value="F:ATP binding"/>
    <property type="evidence" value="ECO:0007669"/>
    <property type="project" value="UniProtKB-KW"/>
</dbReference>
<dbReference type="GO" id="GO:0004412">
    <property type="term" value="F:homoserine dehydrogenase activity"/>
    <property type="evidence" value="ECO:0000250"/>
    <property type="project" value="UniProtKB"/>
</dbReference>
<dbReference type="GO" id="GO:0046872">
    <property type="term" value="F:metal ion binding"/>
    <property type="evidence" value="ECO:0007669"/>
    <property type="project" value="UniProtKB-KW"/>
</dbReference>
<dbReference type="GO" id="GO:0070403">
    <property type="term" value="F:NAD+ binding"/>
    <property type="evidence" value="ECO:0000250"/>
    <property type="project" value="UniProtKB"/>
</dbReference>
<dbReference type="GO" id="GO:0050661">
    <property type="term" value="F:NADP binding"/>
    <property type="evidence" value="ECO:0007669"/>
    <property type="project" value="InterPro"/>
</dbReference>
<dbReference type="GO" id="GO:0009090">
    <property type="term" value="P:homoserine biosynthetic process"/>
    <property type="evidence" value="ECO:0000318"/>
    <property type="project" value="GO_Central"/>
</dbReference>
<dbReference type="GO" id="GO:0009089">
    <property type="term" value="P:lysine biosynthetic process via diaminopimelate"/>
    <property type="evidence" value="ECO:0000250"/>
    <property type="project" value="UniProtKB"/>
</dbReference>
<dbReference type="GO" id="GO:0009086">
    <property type="term" value="P:methionine biosynthetic process"/>
    <property type="evidence" value="ECO:0000250"/>
    <property type="project" value="UniProtKB"/>
</dbReference>
<dbReference type="GO" id="GO:0009088">
    <property type="term" value="P:threonine biosynthetic process"/>
    <property type="evidence" value="ECO:0000250"/>
    <property type="project" value="UniProtKB"/>
</dbReference>
<dbReference type="CDD" id="cd04921">
    <property type="entry name" value="ACT_AKi-HSDH-ThrA-like_1"/>
    <property type="match status" value="1"/>
</dbReference>
<dbReference type="CDD" id="cd04922">
    <property type="entry name" value="ACT_AKi-HSDH-ThrA_2"/>
    <property type="match status" value="1"/>
</dbReference>
<dbReference type="FunFam" id="3.30.2130.10:FF:000001">
    <property type="entry name" value="Bifunctional aspartokinase/homoserine dehydrogenase"/>
    <property type="match status" value="1"/>
</dbReference>
<dbReference type="FunFam" id="3.30.360.10:FF:000006">
    <property type="entry name" value="Bifunctional aspartokinase/homoserine dehydrogenase"/>
    <property type="match status" value="1"/>
</dbReference>
<dbReference type="FunFam" id="3.40.50.720:FF:000083">
    <property type="entry name" value="Bifunctional aspartokinase/homoserine dehydrogenase"/>
    <property type="match status" value="1"/>
</dbReference>
<dbReference type="Gene3D" id="3.40.1160.10">
    <property type="entry name" value="Acetylglutamate kinase-like"/>
    <property type="match status" value="1"/>
</dbReference>
<dbReference type="Gene3D" id="1.20.120.1320">
    <property type="entry name" value="Aspartokinase, catalytic domain"/>
    <property type="match status" value="1"/>
</dbReference>
<dbReference type="Gene3D" id="3.30.360.10">
    <property type="entry name" value="Dihydrodipicolinate Reductase, domain 2"/>
    <property type="match status" value="1"/>
</dbReference>
<dbReference type="Gene3D" id="3.40.50.720">
    <property type="entry name" value="NAD(P)-binding Rossmann-like Domain"/>
    <property type="match status" value="1"/>
</dbReference>
<dbReference type="Gene3D" id="3.30.2130.10">
    <property type="entry name" value="VC0802-like"/>
    <property type="match status" value="1"/>
</dbReference>
<dbReference type="InterPro" id="IPR036393">
    <property type="entry name" value="AceGlu_kinase-like_sf"/>
</dbReference>
<dbReference type="InterPro" id="IPR045865">
    <property type="entry name" value="ACT-like_dom_sf"/>
</dbReference>
<dbReference type="InterPro" id="IPR054352">
    <property type="entry name" value="ACT_Aspartokinase"/>
</dbReference>
<dbReference type="InterPro" id="IPR002912">
    <property type="entry name" value="ACT_dom"/>
</dbReference>
<dbReference type="InterPro" id="IPR049638">
    <property type="entry name" value="AK-HD"/>
</dbReference>
<dbReference type="InterPro" id="IPR001048">
    <property type="entry name" value="Asp/Glu/Uridylate_kinase"/>
</dbReference>
<dbReference type="InterPro" id="IPR005106">
    <property type="entry name" value="Asp/hSer_DH_NAD-bd"/>
</dbReference>
<dbReference type="InterPro" id="IPR001341">
    <property type="entry name" value="Asp_kinase"/>
</dbReference>
<dbReference type="InterPro" id="IPR042199">
    <property type="entry name" value="AsparK_Bifunc_asparK/hSer_DH"/>
</dbReference>
<dbReference type="InterPro" id="IPR018042">
    <property type="entry name" value="Aspartate_kinase_CS"/>
</dbReference>
<dbReference type="InterPro" id="IPR011147">
    <property type="entry name" value="Bifunc_Aspkin/hSer_DH"/>
</dbReference>
<dbReference type="InterPro" id="IPR001342">
    <property type="entry name" value="HDH_cat"/>
</dbReference>
<dbReference type="InterPro" id="IPR019811">
    <property type="entry name" value="HDH_CS"/>
</dbReference>
<dbReference type="InterPro" id="IPR036291">
    <property type="entry name" value="NAD(P)-bd_dom_sf"/>
</dbReference>
<dbReference type="NCBIfam" id="TIGR00657">
    <property type="entry name" value="asp_kinases"/>
    <property type="match status" value="1"/>
</dbReference>
<dbReference type="NCBIfam" id="NF006959">
    <property type="entry name" value="PRK09436.1"/>
    <property type="match status" value="1"/>
</dbReference>
<dbReference type="PANTHER" id="PTHR43070">
    <property type="match status" value="1"/>
</dbReference>
<dbReference type="PANTHER" id="PTHR43070:SF3">
    <property type="entry name" value="HOMOSERINE DEHYDROGENASE"/>
    <property type="match status" value="1"/>
</dbReference>
<dbReference type="Pfam" id="PF00696">
    <property type="entry name" value="AA_kinase"/>
    <property type="match status" value="1"/>
</dbReference>
<dbReference type="Pfam" id="PF22468">
    <property type="entry name" value="ACT_9"/>
    <property type="match status" value="2"/>
</dbReference>
<dbReference type="Pfam" id="PF00742">
    <property type="entry name" value="Homoserine_dh"/>
    <property type="match status" value="1"/>
</dbReference>
<dbReference type="Pfam" id="PF03447">
    <property type="entry name" value="NAD_binding_3"/>
    <property type="match status" value="1"/>
</dbReference>
<dbReference type="PIRSF" id="PIRSF000727">
    <property type="entry name" value="ThrA"/>
    <property type="match status" value="1"/>
</dbReference>
<dbReference type="SUPFAM" id="SSF55021">
    <property type="entry name" value="ACT-like"/>
    <property type="match status" value="2"/>
</dbReference>
<dbReference type="SUPFAM" id="SSF53633">
    <property type="entry name" value="Carbamate kinase-like"/>
    <property type="match status" value="1"/>
</dbReference>
<dbReference type="SUPFAM" id="SSF55347">
    <property type="entry name" value="Glyceraldehyde-3-phosphate dehydrogenase-like, C-terminal domain"/>
    <property type="match status" value="1"/>
</dbReference>
<dbReference type="SUPFAM" id="SSF51735">
    <property type="entry name" value="NAD(P)-binding Rossmann-fold domains"/>
    <property type="match status" value="1"/>
</dbReference>
<dbReference type="PROSITE" id="PS51671">
    <property type="entry name" value="ACT"/>
    <property type="match status" value="2"/>
</dbReference>
<dbReference type="PROSITE" id="PS00324">
    <property type="entry name" value="ASPARTOKINASE"/>
    <property type="match status" value="1"/>
</dbReference>
<dbReference type="PROSITE" id="PS01042">
    <property type="entry name" value="HOMOSER_DHGENASE"/>
    <property type="match status" value="1"/>
</dbReference>
<evidence type="ECO:0000250" key="1"/>
<evidence type="ECO:0000250" key="2">
    <source>
        <dbReference type="UniProtKB" id="F9VNG5"/>
    </source>
</evidence>
<evidence type="ECO:0000250" key="3">
    <source>
        <dbReference type="UniProtKB" id="O58802"/>
    </source>
</evidence>
<evidence type="ECO:0000250" key="4">
    <source>
        <dbReference type="UniProtKB" id="P31116"/>
    </source>
</evidence>
<evidence type="ECO:0000250" key="5">
    <source>
        <dbReference type="UniProtKB" id="Q9SA18"/>
    </source>
</evidence>
<evidence type="ECO:0000255" key="6"/>
<evidence type="ECO:0000255" key="7">
    <source>
        <dbReference type="PROSITE-ProRule" id="PRU01007"/>
    </source>
</evidence>
<evidence type="ECO:0000305" key="8"/>
<sequence>MRVLKFGGTSLANPERFSQAAKLIEQAHLEEQAAGVLSAPAKITNHLVALSEKAALNQSTDTHFNEAIEIFYNIINGLHTENNQFDLNGTKALIDAEFVQIKGLLEEIRQAGKVEDAVKATIDCRGEKLSIAMMKAWFEARGYSVHIVDPVKQLLAKGGYLESSVEIEESTKRVDAANIAKDKVVLMAGFTAGNEKGELVLLGRNGSDYSAACLAACLGASVCEIWTDVDGVYTCDPRLVPDARLLPTLSYREAMELSYFGAKVIHPRTIGPLLPQNIPCVIKNTGNPSAPGSIIDGNVKSESLQVKGITNLDNLAMFNVSGPGMQGMVGMASRVFSAMSGAGISVILITQSSSEYSISFCVPVKSAEVAKTVLETEFANELNEHQLEPIEVIKDLSIISVVGDGMKQAKGIAARFFSALAQANISIVAIAQGSSERSISAVVPQNKAIEAVKATHQALFNNKKVVDMFLVGVGGVGGELIEQVKRQKEYLAKKNVEIRVCAIANSNRMLLDENGLNLEDWKNDLENATQPSDFDVLLSFIKLHHVVNPVFVDCTSAESVAGLYARALKEGFHVVTPNKKANTRELVYYNELRQNAQASQHKFLYETNVGAGLPVIENLQNLLAAGDELEYFEGILSGSLSFIFGKLEEGLSLSEVTALAREKGFTEPDPRDDLSGQDVARKLLILAREAGIELELSDVEVEGVLPKGFSDGKSADEFMAMLPQLDEEFKTRVATAKAEGKVLRYVGKISEGKCKVSIVAVDLNNPLYKVKDGENALAFYTRYYQPIPLLLRGYGAGNAVTAAGIFADILRTLQH</sequence>
<feature type="chain" id="PRO_0000066687" description="Bifunctional aspartokinase/homoserine dehydrogenase">
    <location>
        <begin position="1"/>
        <end position="815"/>
    </location>
</feature>
<feature type="domain" description="ACT 1" evidence="7">
    <location>
        <begin position="320"/>
        <end position="392"/>
    </location>
</feature>
<feature type="domain" description="ACT 2" evidence="7">
    <location>
        <begin position="401"/>
        <end position="478"/>
    </location>
</feature>
<feature type="region of interest" description="Aspartokinase">
    <location>
        <begin position="1"/>
        <end position="249"/>
    </location>
</feature>
<feature type="region of interest" description="Interface">
    <location>
        <begin position="250"/>
        <end position="470"/>
    </location>
</feature>
<feature type="region of interest" description="Homoserine dehydrogenase">
    <location>
        <begin position="471"/>
        <end position="815"/>
    </location>
</feature>
<feature type="active site" description="Proton donor" evidence="6">
    <location>
        <position position="682"/>
    </location>
</feature>
<feature type="binding site" evidence="4">
    <location>
        <position position="473"/>
    </location>
    <ligand>
        <name>NAD(+)</name>
        <dbReference type="ChEBI" id="CHEBI:57540"/>
    </ligand>
</feature>
<feature type="binding site" evidence="4">
    <location>
        <position position="475"/>
    </location>
    <ligand>
        <name>NAD(+)</name>
        <dbReference type="ChEBI" id="CHEBI:57540"/>
    </ligand>
</feature>
<feature type="binding site" evidence="4">
    <location>
        <position position="476"/>
    </location>
    <ligand>
        <name>NAD(+)</name>
        <dbReference type="ChEBI" id="CHEBI:57540"/>
    </ligand>
</feature>
<feature type="binding site" evidence="2">
    <location>
        <position position="476"/>
    </location>
    <ligand>
        <name>NADP(+)</name>
        <dbReference type="ChEBI" id="CHEBI:58349"/>
    </ligand>
</feature>
<feature type="binding site" evidence="3">
    <location>
        <position position="476"/>
    </location>
    <ligand>
        <name>NADPH</name>
        <dbReference type="ChEBI" id="CHEBI:57783"/>
    </ligand>
</feature>
<feature type="binding site" evidence="4">
    <location>
        <position position="504"/>
    </location>
    <ligand>
        <name>NAD(+)</name>
        <dbReference type="ChEBI" id="CHEBI:57540"/>
    </ligand>
</feature>
<feature type="binding site" evidence="4">
    <location>
        <position position="555"/>
    </location>
    <ligand>
        <name>NAD(+)</name>
        <dbReference type="ChEBI" id="CHEBI:57540"/>
    </ligand>
</feature>
<feature type="binding site" evidence="2">
    <location>
        <position position="555"/>
    </location>
    <ligand>
        <name>NADP(+)</name>
        <dbReference type="ChEBI" id="CHEBI:58349"/>
    </ligand>
</feature>
<feature type="binding site" evidence="3">
    <location>
        <position position="555"/>
    </location>
    <ligand>
        <name>NADPH</name>
        <dbReference type="ChEBI" id="CHEBI:57783"/>
    </ligand>
</feature>
<feature type="binding site" evidence="3">
    <location>
        <position position="556"/>
    </location>
    <ligand>
        <name>NADPH</name>
        <dbReference type="ChEBI" id="CHEBI:57783"/>
    </ligand>
</feature>
<feature type="binding site" evidence="2">
    <location>
        <position position="579"/>
    </location>
    <ligand>
        <name>NADP(+)</name>
        <dbReference type="ChEBI" id="CHEBI:58349"/>
    </ligand>
</feature>
<feature type="binding site" evidence="3">
    <location>
        <position position="579"/>
    </location>
    <ligand>
        <name>NADPH</name>
        <dbReference type="ChEBI" id="CHEBI:57783"/>
    </ligand>
</feature>
<feature type="binding site" evidence="4">
    <location>
        <position position="606"/>
    </location>
    <ligand>
        <name>Na(+)</name>
        <dbReference type="ChEBI" id="CHEBI:29101"/>
    </ligand>
</feature>
<feature type="binding site" evidence="4">
    <location>
        <position position="609"/>
    </location>
    <ligand>
        <name>Na(+)</name>
        <dbReference type="ChEBI" id="CHEBI:29101"/>
    </ligand>
</feature>
<feature type="binding site" evidence="4">
    <location>
        <position position="611"/>
    </location>
    <ligand>
        <name>Na(+)</name>
        <dbReference type="ChEBI" id="CHEBI:29101"/>
    </ligand>
</feature>
<feature type="binding site" evidence="4">
    <location>
        <position position="613"/>
    </location>
    <ligand>
        <name>Na(+)</name>
        <dbReference type="ChEBI" id="CHEBI:29101"/>
    </ligand>
</feature>
<feature type="binding site" evidence="2">
    <location>
        <position position="664"/>
    </location>
    <ligand>
        <name>NADP(+)</name>
        <dbReference type="ChEBI" id="CHEBI:58349"/>
    </ligand>
</feature>
<feature type="binding site" evidence="4">
    <location>
        <position position="667"/>
    </location>
    <ligand>
        <name>L-homoserine</name>
        <dbReference type="ChEBI" id="CHEBI:57476"/>
    </ligand>
</feature>
<feature type="binding site" evidence="2">
    <location>
        <position position="667"/>
    </location>
    <ligand>
        <name>NADP(+)</name>
        <dbReference type="ChEBI" id="CHEBI:58349"/>
    </ligand>
</feature>
<feature type="binding site" evidence="4">
    <location>
        <position position="678"/>
    </location>
    <ligand>
        <name>L-homoserine</name>
        <dbReference type="ChEBI" id="CHEBI:57476"/>
    </ligand>
</feature>
<feature type="binding site" evidence="4">
    <location>
        <position position="797"/>
    </location>
    <ligand>
        <name>NAD(+)</name>
        <dbReference type="ChEBI" id="CHEBI:57540"/>
    </ligand>
</feature>
<feature type="binding site" evidence="2">
    <location>
        <position position="797"/>
    </location>
    <ligand>
        <name>NADP(+)</name>
        <dbReference type="ChEBI" id="CHEBI:58349"/>
    </ligand>
</feature>
<feature type="binding site" evidence="3">
    <location>
        <position position="797"/>
    </location>
    <ligand>
        <name>NADPH</name>
        <dbReference type="ChEBI" id="CHEBI:57783"/>
    </ligand>
</feature>
<keyword id="KW-0021">Allosteric enzyme</keyword>
<keyword id="KW-0028">Amino-acid biosynthesis</keyword>
<keyword id="KW-0067">ATP-binding</keyword>
<keyword id="KW-0418">Kinase</keyword>
<keyword id="KW-0457">Lysine biosynthesis</keyword>
<keyword id="KW-0479">Metal-binding</keyword>
<keyword id="KW-0486">Methionine biosynthesis</keyword>
<keyword id="KW-0511">Multifunctional enzyme</keyword>
<keyword id="KW-0520">NAD</keyword>
<keyword id="KW-0521">NADP</keyword>
<keyword id="KW-0547">Nucleotide-binding</keyword>
<keyword id="KW-0560">Oxidoreductase</keyword>
<keyword id="KW-1185">Reference proteome</keyword>
<keyword id="KW-0677">Repeat</keyword>
<keyword id="KW-0915">Sodium</keyword>
<keyword id="KW-0791">Threonine biosynthesis</keyword>
<keyword id="KW-0808">Transferase</keyword>